<feature type="chain" id="PRO_1000122874" description="Sulfurtransferase TusD">
    <location>
        <begin position="1"/>
        <end position="128"/>
    </location>
</feature>
<feature type="active site" description="Cysteine persulfide intermediate" evidence="1">
    <location>
        <position position="78"/>
    </location>
</feature>
<evidence type="ECO:0000255" key="1">
    <source>
        <dbReference type="HAMAP-Rule" id="MF_00390"/>
    </source>
</evidence>
<sequence length="128" mass="13758">MRYAIMVTGPAYGTQQASSALQFAHALLNEGHELASVFFYREGVYNANLLTSPASDEYDLVRAWQKLNTQHGVALNICVAAALRRGIIDETEAGRLALPSANLQPGFTLSGLGALAEASLTCDRVVQF</sequence>
<name>TUSD_SALSV</name>
<gene>
    <name evidence="1" type="primary">tusD</name>
    <name type="ordered locus">SeSA_A3647</name>
</gene>
<comment type="function">
    <text evidence="1">Part of a sulfur-relay system required for 2-thiolation of 5-methylaminomethyl-2-thiouridine (mnm(5)s(2)U) at tRNA wobble positions. Accepts sulfur from TusA and transfers it in turn to TusE.</text>
</comment>
<comment type="subunit">
    <text evidence="1">Heterohexamer, formed by a dimer of trimers. The hexameric TusBCD complex contains 2 copies each of TusB, TusC and TusD. The TusBCD complex interacts with TusE.</text>
</comment>
<comment type="subcellular location">
    <subcellularLocation>
        <location evidence="1">Cytoplasm</location>
    </subcellularLocation>
</comment>
<comment type="similarity">
    <text evidence="1">Belongs to the DsrE/TusD family.</text>
</comment>
<proteinExistence type="inferred from homology"/>
<dbReference type="EC" id="2.8.1.-" evidence="1"/>
<dbReference type="EMBL" id="CP001127">
    <property type="protein sequence ID" value="ACF90532.1"/>
    <property type="molecule type" value="Genomic_DNA"/>
</dbReference>
<dbReference type="RefSeq" id="WP_001268010.1">
    <property type="nucleotide sequence ID" value="NC_011094.1"/>
</dbReference>
<dbReference type="SMR" id="B4TXF3"/>
<dbReference type="KEGG" id="sew:SeSA_A3647"/>
<dbReference type="HOGENOM" id="CLU_132095_0_0_6"/>
<dbReference type="Proteomes" id="UP000001865">
    <property type="component" value="Chromosome"/>
</dbReference>
<dbReference type="GO" id="GO:1990228">
    <property type="term" value="C:sulfurtransferase complex"/>
    <property type="evidence" value="ECO:0007669"/>
    <property type="project" value="TreeGrafter"/>
</dbReference>
<dbReference type="GO" id="GO:0097163">
    <property type="term" value="F:sulfur carrier activity"/>
    <property type="evidence" value="ECO:0007669"/>
    <property type="project" value="TreeGrafter"/>
</dbReference>
<dbReference type="GO" id="GO:0016783">
    <property type="term" value="F:sulfurtransferase activity"/>
    <property type="evidence" value="ECO:0007669"/>
    <property type="project" value="UniProtKB-UniRule"/>
</dbReference>
<dbReference type="GO" id="GO:0002143">
    <property type="term" value="P:tRNA wobble position uridine thiolation"/>
    <property type="evidence" value="ECO:0007669"/>
    <property type="project" value="TreeGrafter"/>
</dbReference>
<dbReference type="FunFam" id="3.40.1260.10:FF:000001">
    <property type="entry name" value="Sulfurtransferase TusD"/>
    <property type="match status" value="1"/>
</dbReference>
<dbReference type="Gene3D" id="3.40.1260.10">
    <property type="entry name" value="DsrEFH-like"/>
    <property type="match status" value="1"/>
</dbReference>
<dbReference type="HAMAP" id="MF_00390">
    <property type="entry name" value="Thiourid_synth_D"/>
    <property type="match status" value="1"/>
</dbReference>
<dbReference type="InterPro" id="IPR027396">
    <property type="entry name" value="DsrEFH-like"/>
</dbReference>
<dbReference type="InterPro" id="IPR003787">
    <property type="entry name" value="Sulphur_relay_DsrE/F-like"/>
</dbReference>
<dbReference type="InterPro" id="IPR017463">
    <property type="entry name" value="Sulphur_relay_TusD/DsrE"/>
</dbReference>
<dbReference type="NCBIfam" id="NF001237">
    <property type="entry name" value="PRK00207.1"/>
    <property type="match status" value="1"/>
</dbReference>
<dbReference type="NCBIfam" id="TIGR03012">
    <property type="entry name" value="sulf_tusD_dsrE"/>
    <property type="match status" value="1"/>
</dbReference>
<dbReference type="PANTHER" id="PTHR34874">
    <property type="entry name" value="PROTEIN YCHN"/>
    <property type="match status" value="1"/>
</dbReference>
<dbReference type="PANTHER" id="PTHR34874:SF3">
    <property type="entry name" value="SULFURTRANSFERASE TUSD"/>
    <property type="match status" value="1"/>
</dbReference>
<dbReference type="Pfam" id="PF02635">
    <property type="entry name" value="DsrE"/>
    <property type="match status" value="1"/>
</dbReference>
<dbReference type="SUPFAM" id="SSF75169">
    <property type="entry name" value="DsrEFH-like"/>
    <property type="match status" value="1"/>
</dbReference>
<protein>
    <recommendedName>
        <fullName evidence="1">Sulfurtransferase TusD</fullName>
        <ecNumber evidence="1">2.8.1.-</ecNumber>
    </recommendedName>
    <alternativeName>
        <fullName evidence="1">tRNA 2-thiouridine synthesizing protein D</fullName>
    </alternativeName>
</protein>
<keyword id="KW-0963">Cytoplasm</keyword>
<keyword id="KW-0808">Transferase</keyword>
<keyword id="KW-0819">tRNA processing</keyword>
<accession>B4TXF3</accession>
<reference key="1">
    <citation type="journal article" date="2011" name="J. Bacteriol.">
        <title>Comparative genomics of 28 Salmonella enterica isolates: evidence for CRISPR-mediated adaptive sublineage evolution.</title>
        <authorList>
            <person name="Fricke W.F."/>
            <person name="Mammel M.K."/>
            <person name="McDermott P.F."/>
            <person name="Tartera C."/>
            <person name="White D.G."/>
            <person name="Leclerc J.E."/>
            <person name="Ravel J."/>
            <person name="Cebula T.A."/>
        </authorList>
    </citation>
    <scope>NUCLEOTIDE SEQUENCE [LARGE SCALE GENOMIC DNA]</scope>
    <source>
        <strain>CVM19633</strain>
    </source>
</reference>
<organism>
    <name type="scientific">Salmonella schwarzengrund (strain CVM19633)</name>
    <dbReference type="NCBI Taxonomy" id="439843"/>
    <lineage>
        <taxon>Bacteria</taxon>
        <taxon>Pseudomonadati</taxon>
        <taxon>Pseudomonadota</taxon>
        <taxon>Gammaproteobacteria</taxon>
        <taxon>Enterobacterales</taxon>
        <taxon>Enterobacteriaceae</taxon>
        <taxon>Salmonella</taxon>
    </lineage>
</organism>